<feature type="chain" id="PRO_1000100454" description="Histidine ammonia-lyase">
    <location>
        <begin position="1"/>
        <end position="510"/>
    </location>
</feature>
<feature type="modified residue" description="2,3-didehydroalanine (Ser)" evidence="1">
    <location>
        <position position="144"/>
    </location>
</feature>
<feature type="cross-link" description="5-imidazolinone (Ala-Gly)" evidence="1">
    <location>
        <begin position="143"/>
        <end position="145"/>
    </location>
</feature>
<organism>
    <name type="scientific">Shewanella woodyi (strain ATCC 51908 / MS32)</name>
    <dbReference type="NCBI Taxonomy" id="392500"/>
    <lineage>
        <taxon>Bacteria</taxon>
        <taxon>Pseudomonadati</taxon>
        <taxon>Pseudomonadota</taxon>
        <taxon>Gammaproteobacteria</taxon>
        <taxon>Alteromonadales</taxon>
        <taxon>Shewanellaceae</taxon>
        <taxon>Shewanella</taxon>
    </lineage>
</organism>
<comment type="catalytic activity">
    <reaction evidence="1">
        <text>L-histidine = trans-urocanate + NH4(+)</text>
        <dbReference type="Rhea" id="RHEA:21232"/>
        <dbReference type="ChEBI" id="CHEBI:17771"/>
        <dbReference type="ChEBI" id="CHEBI:28938"/>
        <dbReference type="ChEBI" id="CHEBI:57595"/>
        <dbReference type="EC" id="4.3.1.3"/>
    </reaction>
</comment>
<comment type="pathway">
    <text evidence="1">Amino-acid degradation; L-histidine degradation into L-glutamate; N-formimidoyl-L-glutamate from L-histidine: step 1/3.</text>
</comment>
<comment type="subcellular location">
    <subcellularLocation>
        <location evidence="1">Cytoplasm</location>
    </subcellularLocation>
</comment>
<comment type="PTM">
    <text evidence="1">Contains an active site 4-methylidene-imidazol-5-one (MIO), which is formed autocatalytically by cyclization and dehydration of residues Ala-Ser-Gly.</text>
</comment>
<comment type="similarity">
    <text evidence="1">Belongs to the PAL/histidase family.</text>
</comment>
<reference key="1">
    <citation type="submission" date="2008-02" db="EMBL/GenBank/DDBJ databases">
        <title>Complete sequence of Shewanella woodyi ATCC 51908.</title>
        <authorList>
            <consortium name="US DOE Joint Genome Institute"/>
            <person name="Copeland A."/>
            <person name="Lucas S."/>
            <person name="Lapidus A."/>
            <person name="Glavina del Rio T."/>
            <person name="Dalin E."/>
            <person name="Tice H."/>
            <person name="Bruce D."/>
            <person name="Goodwin L."/>
            <person name="Pitluck S."/>
            <person name="Sims D."/>
            <person name="Brettin T."/>
            <person name="Detter J.C."/>
            <person name="Han C."/>
            <person name="Kuske C.R."/>
            <person name="Schmutz J."/>
            <person name="Larimer F."/>
            <person name="Land M."/>
            <person name="Hauser L."/>
            <person name="Kyrpides N."/>
            <person name="Lykidis A."/>
            <person name="Zhao J.-S."/>
            <person name="Richardson P."/>
        </authorList>
    </citation>
    <scope>NUCLEOTIDE SEQUENCE [LARGE SCALE GENOMIC DNA]</scope>
    <source>
        <strain>ATCC 51908 / MS32</strain>
    </source>
</reference>
<proteinExistence type="inferred from homology"/>
<sequence>MSHLVLKPGTLTLSQIRDISRNKLTLELADEAIADINISSGIVQKIIDEGRTVYGINTGFGLLANTKIEDKDLQLLQRSIVLSHAAGTGQYMQDATVRLMMVLKINSLSRGFSGIRLEVINFLIQLVNAEVYPCVPEKGSVGASGDLAPLSHMSLTLLGEGEVSYKGQIMSAKEGLEIAGLEPIELAAKEGLALLNGTQASTALALEGLFNAEDLFAASSVIGAMSVEAAMGSRSPFDPRIHAARGQKGQMDAAGLFRHLLGDESEISLSHVDCEKVQDPYSLRCQPQVLGACLTQIRQAAEVLGTEANGVTDNPLVFQDTGDIISGGNFHAEPVAMAADNLAIALAELGAIAERRIALLIDPNLSKLPPFLVENGGVNSGFMIAQVTAAALASENKTYAHPASVDSLPTSANQEDHVSMATFAARRLRDMSENTRGVLAIELLAAAQGLDFRAPLQPSAAVAKAKAELREVVTYYDKDRFFGPDIEASTDLLLTSSFNSYLPAGILASF</sequence>
<protein>
    <recommendedName>
        <fullName evidence="1">Histidine ammonia-lyase</fullName>
        <shortName evidence="1">Histidase</shortName>
        <ecNumber evidence="1">4.3.1.3</ecNumber>
    </recommendedName>
</protein>
<gene>
    <name evidence="1" type="primary">hutH</name>
    <name type="ordered locus">Swoo_4837</name>
</gene>
<keyword id="KW-0963">Cytoplasm</keyword>
<keyword id="KW-0369">Histidine metabolism</keyword>
<keyword id="KW-0456">Lyase</keyword>
<keyword id="KW-1185">Reference proteome</keyword>
<evidence type="ECO:0000255" key="1">
    <source>
        <dbReference type="HAMAP-Rule" id="MF_00229"/>
    </source>
</evidence>
<dbReference type="EC" id="4.3.1.3" evidence="1"/>
<dbReference type="EMBL" id="CP000961">
    <property type="protein sequence ID" value="ACA89086.1"/>
    <property type="molecule type" value="Genomic_DNA"/>
</dbReference>
<dbReference type="RefSeq" id="WP_012327403.1">
    <property type="nucleotide sequence ID" value="NC_010506.1"/>
</dbReference>
<dbReference type="SMR" id="B1KP55"/>
<dbReference type="STRING" id="392500.Swoo_4837"/>
<dbReference type="KEGG" id="swd:Swoo_4837"/>
<dbReference type="eggNOG" id="COG2986">
    <property type="taxonomic scope" value="Bacteria"/>
</dbReference>
<dbReference type="HOGENOM" id="CLU_014801_4_0_6"/>
<dbReference type="UniPathway" id="UPA00379">
    <property type="reaction ID" value="UER00549"/>
</dbReference>
<dbReference type="Proteomes" id="UP000002168">
    <property type="component" value="Chromosome"/>
</dbReference>
<dbReference type="GO" id="GO:0005737">
    <property type="term" value="C:cytoplasm"/>
    <property type="evidence" value="ECO:0007669"/>
    <property type="project" value="UniProtKB-SubCell"/>
</dbReference>
<dbReference type="GO" id="GO:0004397">
    <property type="term" value="F:histidine ammonia-lyase activity"/>
    <property type="evidence" value="ECO:0007669"/>
    <property type="project" value="UniProtKB-UniRule"/>
</dbReference>
<dbReference type="GO" id="GO:0019556">
    <property type="term" value="P:L-histidine catabolic process to glutamate and formamide"/>
    <property type="evidence" value="ECO:0007669"/>
    <property type="project" value="UniProtKB-UniPathway"/>
</dbReference>
<dbReference type="GO" id="GO:0019557">
    <property type="term" value="P:L-histidine catabolic process to glutamate and formate"/>
    <property type="evidence" value="ECO:0007669"/>
    <property type="project" value="UniProtKB-UniPathway"/>
</dbReference>
<dbReference type="CDD" id="cd00332">
    <property type="entry name" value="PAL-HAL"/>
    <property type="match status" value="1"/>
</dbReference>
<dbReference type="FunFam" id="1.10.275.10:FF:000005">
    <property type="entry name" value="Histidine ammonia-lyase"/>
    <property type="match status" value="1"/>
</dbReference>
<dbReference type="FunFam" id="1.20.200.10:FF:000003">
    <property type="entry name" value="Histidine ammonia-lyase"/>
    <property type="match status" value="1"/>
</dbReference>
<dbReference type="Gene3D" id="1.20.200.10">
    <property type="entry name" value="Fumarase/aspartase (Central domain)"/>
    <property type="match status" value="1"/>
</dbReference>
<dbReference type="Gene3D" id="1.10.275.10">
    <property type="entry name" value="Fumarase/aspartase (N-terminal domain)"/>
    <property type="match status" value="1"/>
</dbReference>
<dbReference type="HAMAP" id="MF_00229">
    <property type="entry name" value="His_ammonia_lyase"/>
    <property type="match status" value="1"/>
</dbReference>
<dbReference type="InterPro" id="IPR001106">
    <property type="entry name" value="Aromatic_Lyase"/>
</dbReference>
<dbReference type="InterPro" id="IPR024083">
    <property type="entry name" value="Fumarase/histidase_N"/>
</dbReference>
<dbReference type="InterPro" id="IPR005921">
    <property type="entry name" value="HutH"/>
</dbReference>
<dbReference type="InterPro" id="IPR008948">
    <property type="entry name" value="L-Aspartase-like"/>
</dbReference>
<dbReference type="InterPro" id="IPR022313">
    <property type="entry name" value="Phe/His_NH3-lyase_AS"/>
</dbReference>
<dbReference type="NCBIfam" id="TIGR01225">
    <property type="entry name" value="hutH"/>
    <property type="match status" value="1"/>
</dbReference>
<dbReference type="NCBIfam" id="NF006871">
    <property type="entry name" value="PRK09367.1"/>
    <property type="match status" value="1"/>
</dbReference>
<dbReference type="PANTHER" id="PTHR10362">
    <property type="entry name" value="HISTIDINE AMMONIA-LYASE"/>
    <property type="match status" value="1"/>
</dbReference>
<dbReference type="Pfam" id="PF00221">
    <property type="entry name" value="Lyase_aromatic"/>
    <property type="match status" value="1"/>
</dbReference>
<dbReference type="SUPFAM" id="SSF48557">
    <property type="entry name" value="L-aspartase-like"/>
    <property type="match status" value="1"/>
</dbReference>
<dbReference type="PROSITE" id="PS00488">
    <property type="entry name" value="PAL_HISTIDASE"/>
    <property type="match status" value="1"/>
</dbReference>
<accession>B1KP55</accession>
<name>HUTH_SHEWM</name>